<accession>A0A1J0HSK7</accession>
<accession>W3XJ18</accession>
<name>IACC_PESFW</name>
<protein>
    <recommendedName>
        <fullName evidence="4">Short-chain dehydrogenase/reductase iacC</fullName>
        <ecNumber evidence="6">1.1.1.-</ecNumber>
    </recommendedName>
    <alternativeName>
        <fullName evidence="4">Iso-A82775C biosynthesis cluster protein C</fullName>
    </alternativeName>
</protein>
<reference key="1">
    <citation type="journal article" date="2018" name="ACS Chem. Biol.">
        <title>Characterization of a prenyltransferase for iso-A82775C biosynthesis and generation of new congeners of chloropestolides.</title>
        <authorList>
            <person name="Pan Y."/>
            <person name="Liu L."/>
            <person name="Guan F."/>
            <person name="Li E."/>
            <person name="Jin J."/>
            <person name="Li J."/>
            <person name="Che Y."/>
            <person name="Liu G."/>
        </authorList>
    </citation>
    <scope>NUCLEOTIDE SEQUENCE [GENOMIC DNA]</scope>
    <scope>FUNCTION</scope>
    <scope>DISRUPTION PHENOTYPE</scope>
    <scope>INDUCTION</scope>
    <scope>PATHWAY</scope>
    <scope>BIOTECHNOLOGY</scope>
    <source>
        <strain>W106-1 / CGMCC3.15140</strain>
    </source>
</reference>
<reference key="2">
    <citation type="journal article" date="2015" name="BMC Genomics">
        <title>Genomic and transcriptomic analysis of the endophytic fungus Pestalotiopsis fici reveals its lifestyle and high potential for synthesis of natural products.</title>
        <authorList>
            <person name="Wang X."/>
            <person name="Zhang X."/>
            <person name="Liu L."/>
            <person name="Xiang M."/>
            <person name="Wang W."/>
            <person name="Sun X."/>
            <person name="Che Y."/>
            <person name="Guo L."/>
            <person name="Liu G."/>
            <person name="Guo L."/>
            <person name="Wang C."/>
            <person name="Yin W.B."/>
            <person name="Stadler M."/>
            <person name="Zhang X."/>
            <person name="Liu X."/>
        </authorList>
    </citation>
    <scope>NUCLEOTIDE SEQUENCE [LARGE SCALE GENOMIC DNA]</scope>
    <source>
        <strain>W106-1 / CGMCC3.15140</strain>
    </source>
</reference>
<sequence>MSVYVITGASKGIGFGFVKSISEDPANLVVGLVRDKAATEKKVAEELGGRTNIHILHGDLTSYESLKQAAADTAKIVGERGVDYLVANGAYPSQFDAYVPIGALGDQVEELEEVSAKLFKTNVVGNIHLFNLFIPLVKQSKAKKVIAISSGHGDLDWINNNDIEISSLYGASKAALNVVVAKFSVQYKPEGVLFFSLSPGAVEVGHYDNVSPEQVQGLMGFMGKIQAYAPHFKGAVPVEDAVRTIRATWERASIETGYAGAFVSQHGNKQWL</sequence>
<organism>
    <name type="scientific">Pestalotiopsis fici (strain W106-1 / CGMCC3.15140)</name>
    <dbReference type="NCBI Taxonomy" id="1229662"/>
    <lineage>
        <taxon>Eukaryota</taxon>
        <taxon>Fungi</taxon>
        <taxon>Dikarya</taxon>
        <taxon>Ascomycota</taxon>
        <taxon>Pezizomycotina</taxon>
        <taxon>Sordariomycetes</taxon>
        <taxon>Xylariomycetidae</taxon>
        <taxon>Amphisphaeriales</taxon>
        <taxon>Sporocadaceae</taxon>
        <taxon>Pestalotiopsis</taxon>
    </lineage>
</organism>
<proteinExistence type="evidence at protein level"/>
<keyword id="KW-0521">NADP</keyword>
<keyword id="KW-0560">Oxidoreductase</keyword>
<keyword id="KW-1185">Reference proteome</keyword>
<evidence type="ECO:0000250" key="1">
    <source>
        <dbReference type="UniProtKB" id="L0E2Z4"/>
    </source>
</evidence>
<evidence type="ECO:0000250" key="2">
    <source>
        <dbReference type="UniProtKB" id="O93868"/>
    </source>
</evidence>
<evidence type="ECO:0000269" key="3">
    <source>
    </source>
</evidence>
<evidence type="ECO:0000303" key="4">
    <source>
    </source>
</evidence>
<evidence type="ECO:0000305" key="5"/>
<evidence type="ECO:0000305" key="6">
    <source>
    </source>
</evidence>
<dbReference type="EC" id="1.1.1.-" evidence="6"/>
<dbReference type="EMBL" id="KU963195">
    <property type="protein sequence ID" value="APC57595.1"/>
    <property type="molecule type" value="Genomic_DNA"/>
</dbReference>
<dbReference type="EMBL" id="KI912110">
    <property type="protein sequence ID" value="ETS86014.1"/>
    <property type="molecule type" value="Genomic_DNA"/>
</dbReference>
<dbReference type="RefSeq" id="XP_007830811.1">
    <property type="nucleotide sequence ID" value="XM_007832620.1"/>
</dbReference>
<dbReference type="SMR" id="A0A1J0HSK7"/>
<dbReference type="GeneID" id="19269052"/>
<dbReference type="KEGG" id="pfy:PFICI_04039"/>
<dbReference type="eggNOG" id="KOG1611">
    <property type="taxonomic scope" value="Eukaryota"/>
</dbReference>
<dbReference type="HOGENOM" id="CLU_010194_9_2_1"/>
<dbReference type="InParanoid" id="A0A1J0HSK7"/>
<dbReference type="OMA" id="IRSTWEK"/>
<dbReference type="OrthoDB" id="7289984at2759"/>
<dbReference type="Proteomes" id="UP000030651">
    <property type="component" value="Unassembled WGS sequence"/>
</dbReference>
<dbReference type="GO" id="GO:0016616">
    <property type="term" value="F:oxidoreductase activity, acting on the CH-OH group of donors, NAD or NADP as acceptor"/>
    <property type="evidence" value="ECO:0007669"/>
    <property type="project" value="TreeGrafter"/>
</dbReference>
<dbReference type="Gene3D" id="3.40.50.720">
    <property type="entry name" value="NAD(P)-binding Rossmann-like Domain"/>
    <property type="match status" value="1"/>
</dbReference>
<dbReference type="InterPro" id="IPR036291">
    <property type="entry name" value="NAD(P)-bd_dom_sf"/>
</dbReference>
<dbReference type="InterPro" id="IPR020904">
    <property type="entry name" value="Sc_DH/Rdtase_CS"/>
</dbReference>
<dbReference type="InterPro" id="IPR052184">
    <property type="entry name" value="SDR_enzymes"/>
</dbReference>
<dbReference type="InterPro" id="IPR002347">
    <property type="entry name" value="SDR_fam"/>
</dbReference>
<dbReference type="PANTHER" id="PTHR45458:SF3">
    <property type="entry name" value="CHAIN DEHYDROGENASE (ATSC), PUTATIVE-RELATED"/>
    <property type="match status" value="1"/>
</dbReference>
<dbReference type="PANTHER" id="PTHR45458">
    <property type="entry name" value="SHORT-CHAIN DEHYDROGENASE/REDUCTASE SDR"/>
    <property type="match status" value="1"/>
</dbReference>
<dbReference type="Pfam" id="PF00106">
    <property type="entry name" value="adh_short"/>
    <property type="match status" value="1"/>
</dbReference>
<dbReference type="PRINTS" id="PR00081">
    <property type="entry name" value="GDHRDH"/>
</dbReference>
<dbReference type="SUPFAM" id="SSF51735">
    <property type="entry name" value="NAD(P)-binding Rossmann-fold domains"/>
    <property type="match status" value="1"/>
</dbReference>
<dbReference type="PROSITE" id="PS00061">
    <property type="entry name" value="ADH_SHORT"/>
    <property type="match status" value="1"/>
</dbReference>
<gene>
    <name evidence="4" type="primary">iacC</name>
    <name type="ORF">PFICI_04039</name>
</gene>
<feature type="chain" id="PRO_0000451378" description="Short-chain dehydrogenase/reductase iacC">
    <location>
        <begin position="1"/>
        <end position="272"/>
    </location>
</feature>
<feature type="active site" description="Proton donor" evidence="2">
    <location>
        <position position="150"/>
    </location>
</feature>
<feature type="active site" description="Proton donor" evidence="2">
    <location>
        <position position="169"/>
    </location>
</feature>
<feature type="active site" description="Lowers pKa of active site Tyr" evidence="2">
    <location>
        <position position="173"/>
    </location>
</feature>
<feature type="binding site" evidence="1">
    <location>
        <position position="13"/>
    </location>
    <ligand>
        <name>NADP(+)</name>
        <dbReference type="ChEBI" id="CHEBI:58349"/>
    </ligand>
</feature>
<feature type="binding site" evidence="1">
    <location>
        <position position="59"/>
    </location>
    <ligand>
        <name>NADP(+)</name>
        <dbReference type="ChEBI" id="CHEBI:58349"/>
    </ligand>
</feature>
<feature type="binding site" evidence="2">
    <location>
        <position position="88"/>
    </location>
    <ligand>
        <name>NADP(+)</name>
        <dbReference type="ChEBI" id="CHEBI:58349"/>
    </ligand>
</feature>
<feature type="binding site" evidence="2">
    <location>
        <position position="169"/>
    </location>
    <ligand>
        <name>NADP(+)</name>
        <dbReference type="ChEBI" id="CHEBI:58349"/>
    </ligand>
</feature>
<feature type="binding site" evidence="2">
    <location>
        <position position="173"/>
    </location>
    <ligand>
        <name>NADP(+)</name>
        <dbReference type="ChEBI" id="CHEBI:58349"/>
    </ligand>
</feature>
<feature type="binding site" evidence="2">
    <location>
        <position position="202"/>
    </location>
    <ligand>
        <name>NADP(+)</name>
        <dbReference type="ChEBI" id="CHEBI:58349"/>
    </ligand>
</feature>
<comment type="function">
    <text evidence="3 6">Short-chain dehydrogenase/reductase; part of the gene cluster that mediates the biosynthesis of iso-A82775C, a enylepoxycyclohexane and biosynthetic precursor of the chloropestolide anticancer natural products (PubMed:29384350). Within the cluster, the prenyltransferase iacE prenylates siccayne to generate pestalodiol E, using dimethylallyl diphosphate (DMAPP) as cosubstrate (PubMed:29384350). The probable oxidoreductase iacF is then involved in the epoxidation of pestalodiol F to pestalodiol F, which is further converted to pestalofone A by the short-chain dehydrogenase/reductase iacG (PubMed:29384350). Iso-A82775C is subsequently generated from pestalofone A by the short-chain dehydrogenase/reductase iacC (PubMed:29384350). Iso-A82775C is further condensed with maldoxin via a Diels-Alder reaction to produce the anticancer natural products chloropestolides A to E (Probable).</text>
</comment>
<comment type="pathway">
    <text evidence="3">Secondary metabolite biosynthesis.</text>
</comment>
<comment type="induction">
    <text evidence="3">Expression is co-regulated with the other genes from the iso-A82775C biosynthesis cluster and probably controlled by the cluster-specific transcription factors iacI and iacK.</text>
</comment>
<comment type="disruption phenotype">
    <text evidence="3">Abolishes the production of iso-A82775C, but accumulates pestalofone A.</text>
</comment>
<comment type="biotechnology">
    <text evidence="3">Iso-A82775C is a precursor for the biosynthesis of the anticancer natural products chloropestolides A to E via a Diesls-Alder reaction with maldoxin (PubMed:29384350). In the absence of the prenyltransferase iacE, siccayne accumulates instead of iso-A82775C and can also be condensed with maldoxin to produce chloropestolides H to K, which show also antibacterial and anticancer properties (PubMed:29384350).</text>
</comment>
<comment type="similarity">
    <text evidence="5">Belongs to the short-chain dehydrogenases/reductases (SDR) family.</text>
</comment>